<reference key="1">
    <citation type="journal article" date="2011" name="J. Bacteriol.">
        <title>Complete genome sequence of the plant growth-promoting endophyte Burkholderia phytofirmans strain PsJN.</title>
        <authorList>
            <person name="Weilharter A."/>
            <person name="Mitter B."/>
            <person name="Shin M.V."/>
            <person name="Chain P.S."/>
            <person name="Nowak J."/>
            <person name="Sessitsch A."/>
        </authorList>
    </citation>
    <scope>NUCLEOTIDE SEQUENCE [LARGE SCALE GENOMIC DNA]</scope>
    <source>
        <strain>DSM 17436 / LMG 22146 / PsJN</strain>
    </source>
</reference>
<evidence type="ECO:0000255" key="1">
    <source>
        <dbReference type="HAMAP-Rule" id="MF_01357"/>
    </source>
</evidence>
<comment type="function">
    <text evidence="1">NDH-1 shuttles electrons from NADH, via FMN and iron-sulfur (Fe-S) centers, to quinones in the respiratory chain. The immediate electron acceptor for the enzyme in this species is believed to be ubiquinone. Couples the redox reaction to proton translocation (for every two electrons transferred, four hydrogen ions are translocated across the cytoplasmic membrane), and thus conserves the redox energy in a proton gradient.</text>
</comment>
<comment type="catalytic activity">
    <reaction evidence="1">
        <text>a quinone + NADH + 5 H(+)(in) = a quinol + NAD(+) + 4 H(+)(out)</text>
        <dbReference type="Rhea" id="RHEA:57888"/>
        <dbReference type="ChEBI" id="CHEBI:15378"/>
        <dbReference type="ChEBI" id="CHEBI:24646"/>
        <dbReference type="ChEBI" id="CHEBI:57540"/>
        <dbReference type="ChEBI" id="CHEBI:57945"/>
        <dbReference type="ChEBI" id="CHEBI:132124"/>
    </reaction>
</comment>
<comment type="subunit">
    <text evidence="1">NDH-1 is composed of 14 different subunits. Subunits NuoB, C, D, E, F, and G constitute the peripheral sector of the complex.</text>
</comment>
<comment type="subcellular location">
    <subcellularLocation>
        <location evidence="1">Cell inner membrane</location>
        <topology evidence="1">Peripheral membrane protein</topology>
        <orientation evidence="1">Cytoplasmic side</orientation>
    </subcellularLocation>
</comment>
<comment type="similarity">
    <text evidence="1">Belongs to the complex I 30 kDa subunit family.</text>
</comment>
<gene>
    <name evidence="1" type="primary">nuoC</name>
    <name type="ordered locus">Bphyt_1345</name>
</gene>
<sequence length="200" mass="22955">MASKLETLKANLEAAFGGLLLNLSEAIGELTIVVKASDYLNVATRLRDDRSLGFEQCVDLCGVDYQTYAEGAYDGPRFAAVLHLLSVQNNWRLRLRVFAPDDEVPILPSVVEIWNSVNWYEREAFDLYGIVFEGHPDLRRILTDYGFIGHPFRKDFPVSGYVEMRYDPEEKRVVYQPVTIEPREITPRVIREDRYGGLKH</sequence>
<protein>
    <recommendedName>
        <fullName evidence="1">NADH-quinone oxidoreductase subunit C</fullName>
        <ecNumber evidence="1">7.1.1.-</ecNumber>
    </recommendedName>
    <alternativeName>
        <fullName evidence="1">NADH dehydrogenase I subunit C</fullName>
    </alternativeName>
    <alternativeName>
        <fullName evidence="1">NDH-1 subunit C</fullName>
    </alternativeName>
</protein>
<name>NUOC_PARPJ</name>
<keyword id="KW-0997">Cell inner membrane</keyword>
<keyword id="KW-1003">Cell membrane</keyword>
<keyword id="KW-0472">Membrane</keyword>
<keyword id="KW-0520">NAD</keyword>
<keyword id="KW-0874">Quinone</keyword>
<keyword id="KW-1278">Translocase</keyword>
<keyword id="KW-0813">Transport</keyword>
<keyword id="KW-0830">Ubiquinone</keyword>
<feature type="chain" id="PRO_0000358070" description="NADH-quinone oxidoreductase subunit C">
    <location>
        <begin position="1"/>
        <end position="200"/>
    </location>
</feature>
<organism>
    <name type="scientific">Paraburkholderia phytofirmans (strain DSM 17436 / LMG 22146 / PsJN)</name>
    <name type="common">Burkholderia phytofirmans</name>
    <dbReference type="NCBI Taxonomy" id="398527"/>
    <lineage>
        <taxon>Bacteria</taxon>
        <taxon>Pseudomonadati</taxon>
        <taxon>Pseudomonadota</taxon>
        <taxon>Betaproteobacteria</taxon>
        <taxon>Burkholderiales</taxon>
        <taxon>Burkholderiaceae</taxon>
        <taxon>Paraburkholderia</taxon>
    </lineage>
</organism>
<proteinExistence type="inferred from homology"/>
<dbReference type="EC" id="7.1.1.-" evidence="1"/>
<dbReference type="EMBL" id="CP001052">
    <property type="protein sequence ID" value="ACD15760.1"/>
    <property type="molecule type" value="Genomic_DNA"/>
</dbReference>
<dbReference type="RefSeq" id="WP_012432377.1">
    <property type="nucleotide sequence ID" value="NC_010681.1"/>
</dbReference>
<dbReference type="SMR" id="B2T2E9"/>
<dbReference type="STRING" id="398527.Bphyt_1345"/>
<dbReference type="KEGG" id="bpy:Bphyt_1345"/>
<dbReference type="eggNOG" id="COG0852">
    <property type="taxonomic scope" value="Bacteria"/>
</dbReference>
<dbReference type="HOGENOM" id="CLU_042628_2_1_4"/>
<dbReference type="OrthoDB" id="9803286at2"/>
<dbReference type="Proteomes" id="UP000001739">
    <property type="component" value="Chromosome 1"/>
</dbReference>
<dbReference type="GO" id="GO:0005886">
    <property type="term" value="C:plasma membrane"/>
    <property type="evidence" value="ECO:0007669"/>
    <property type="project" value="UniProtKB-SubCell"/>
</dbReference>
<dbReference type="GO" id="GO:0008137">
    <property type="term" value="F:NADH dehydrogenase (ubiquinone) activity"/>
    <property type="evidence" value="ECO:0007669"/>
    <property type="project" value="InterPro"/>
</dbReference>
<dbReference type="GO" id="GO:0050136">
    <property type="term" value="F:NADH:ubiquinone reductase (non-electrogenic) activity"/>
    <property type="evidence" value="ECO:0007669"/>
    <property type="project" value="UniProtKB-UniRule"/>
</dbReference>
<dbReference type="GO" id="GO:0048038">
    <property type="term" value="F:quinone binding"/>
    <property type="evidence" value="ECO:0007669"/>
    <property type="project" value="UniProtKB-KW"/>
</dbReference>
<dbReference type="Gene3D" id="3.30.460.80">
    <property type="entry name" value="NADH:ubiquinone oxidoreductase, 30kDa subunit"/>
    <property type="match status" value="1"/>
</dbReference>
<dbReference type="HAMAP" id="MF_01357">
    <property type="entry name" value="NDH1_NuoC"/>
    <property type="match status" value="1"/>
</dbReference>
<dbReference type="InterPro" id="IPR010218">
    <property type="entry name" value="NADH_DH_suC"/>
</dbReference>
<dbReference type="InterPro" id="IPR037232">
    <property type="entry name" value="NADH_quin_OxRdtase_su_C/D-like"/>
</dbReference>
<dbReference type="InterPro" id="IPR001268">
    <property type="entry name" value="NADH_UbQ_OxRdtase_30kDa_su"/>
</dbReference>
<dbReference type="InterPro" id="IPR020396">
    <property type="entry name" value="NADH_UbQ_OxRdtase_CS"/>
</dbReference>
<dbReference type="NCBIfam" id="TIGR01961">
    <property type="entry name" value="NuoC_fam"/>
    <property type="match status" value="1"/>
</dbReference>
<dbReference type="NCBIfam" id="NF004730">
    <property type="entry name" value="PRK06074.1-1"/>
    <property type="match status" value="1"/>
</dbReference>
<dbReference type="PANTHER" id="PTHR10884:SF14">
    <property type="entry name" value="NADH DEHYDROGENASE [UBIQUINONE] IRON-SULFUR PROTEIN 3, MITOCHONDRIAL"/>
    <property type="match status" value="1"/>
</dbReference>
<dbReference type="PANTHER" id="PTHR10884">
    <property type="entry name" value="NADH DEHYDROGENASE UBIQUINONE IRON-SULFUR PROTEIN 3"/>
    <property type="match status" value="1"/>
</dbReference>
<dbReference type="Pfam" id="PF00329">
    <property type="entry name" value="Complex1_30kDa"/>
    <property type="match status" value="1"/>
</dbReference>
<dbReference type="SUPFAM" id="SSF143243">
    <property type="entry name" value="Nqo5-like"/>
    <property type="match status" value="1"/>
</dbReference>
<dbReference type="PROSITE" id="PS00542">
    <property type="entry name" value="COMPLEX1_30K"/>
    <property type="match status" value="1"/>
</dbReference>
<accession>B2T2E9</accession>